<gene>
    <name type="primary">Gpr6</name>
    <name type="synonym">Gm233</name>
</gene>
<accession>Q6YNI2</accession>
<dbReference type="EMBL" id="AY064488">
    <property type="protein sequence ID" value="AAL40876.1"/>
    <property type="molecule type" value="mRNA"/>
</dbReference>
<dbReference type="EMBL" id="AK139367">
    <property type="protein sequence ID" value="BAE23977.1"/>
    <property type="molecule type" value="mRNA"/>
</dbReference>
<dbReference type="CCDS" id="CCDS23802.1"/>
<dbReference type="RefSeq" id="NP_951013.1">
    <property type="nucleotide sequence ID" value="NM_199058.2"/>
</dbReference>
<dbReference type="RefSeq" id="XP_006512596.1">
    <property type="nucleotide sequence ID" value="XM_006512533.2"/>
</dbReference>
<dbReference type="SMR" id="Q6YNI2"/>
<dbReference type="FunCoup" id="Q6YNI2">
    <property type="interactions" value="193"/>
</dbReference>
<dbReference type="STRING" id="10090.ENSMUSP00000057323"/>
<dbReference type="GuidetoPHARMACOLOGY" id="85"/>
<dbReference type="GlyCosmos" id="Q6YNI2">
    <property type="glycosylation" value="3 sites, No reported glycans"/>
</dbReference>
<dbReference type="GlyGen" id="Q6YNI2">
    <property type="glycosylation" value="3 sites"/>
</dbReference>
<dbReference type="PhosphoSitePlus" id="Q6YNI2"/>
<dbReference type="PaxDb" id="10090-ENSMUSP00000057323"/>
<dbReference type="Antibodypedia" id="19237">
    <property type="antibodies" value="108 antibodies from 27 providers"/>
</dbReference>
<dbReference type="DNASU" id="140741"/>
<dbReference type="Ensembl" id="ENSMUST00000061796.8">
    <property type="protein sequence ID" value="ENSMUSP00000057323.7"/>
    <property type="gene ID" value="ENSMUSG00000046922.8"/>
</dbReference>
<dbReference type="GeneID" id="140741"/>
<dbReference type="KEGG" id="mmu:140741"/>
<dbReference type="UCSC" id="uc007exj.1">
    <property type="organism name" value="mouse"/>
</dbReference>
<dbReference type="AGR" id="MGI:2155249"/>
<dbReference type="CTD" id="2830"/>
<dbReference type="MGI" id="MGI:2155249">
    <property type="gene designation" value="Gpr6"/>
</dbReference>
<dbReference type="VEuPathDB" id="HostDB:ENSMUSG00000046922"/>
<dbReference type="eggNOG" id="KOG3656">
    <property type="taxonomic scope" value="Eukaryota"/>
</dbReference>
<dbReference type="GeneTree" id="ENSGT01110000267224"/>
<dbReference type="HOGENOM" id="CLU_065071_0_0_1"/>
<dbReference type="InParanoid" id="Q6YNI2"/>
<dbReference type="OMA" id="YCVVGDP"/>
<dbReference type="OrthoDB" id="10042731at2759"/>
<dbReference type="PhylomeDB" id="Q6YNI2"/>
<dbReference type="TreeFam" id="TF330052"/>
<dbReference type="BioGRID-ORCS" id="140741">
    <property type="hits" value="4 hits in 77 CRISPR screens"/>
</dbReference>
<dbReference type="PRO" id="PR:Q6YNI2"/>
<dbReference type="Proteomes" id="UP000000589">
    <property type="component" value="Chromosome 10"/>
</dbReference>
<dbReference type="RNAct" id="Q6YNI2">
    <property type="molecule type" value="protein"/>
</dbReference>
<dbReference type="Bgee" id="ENSMUSG00000046922">
    <property type="expression patterns" value="Expressed in dorsal striatum and 52 other cell types or tissues"/>
</dbReference>
<dbReference type="GO" id="GO:0005886">
    <property type="term" value="C:plasma membrane"/>
    <property type="evidence" value="ECO:0007669"/>
    <property type="project" value="UniProtKB-SubCell"/>
</dbReference>
<dbReference type="GO" id="GO:0038036">
    <property type="term" value="F:sphingosine-1-phosphate receptor activity"/>
    <property type="evidence" value="ECO:0000314"/>
    <property type="project" value="MGI"/>
</dbReference>
<dbReference type="GO" id="GO:0007204">
    <property type="term" value="P:positive regulation of cytosolic calcium ion concentration"/>
    <property type="evidence" value="ECO:0000314"/>
    <property type="project" value="MGI"/>
</dbReference>
<dbReference type="FunFam" id="1.20.1070.10:FF:000067">
    <property type="entry name" value="G-protein coupled receptor 12"/>
    <property type="match status" value="1"/>
</dbReference>
<dbReference type="Gene3D" id="1.20.1070.10">
    <property type="entry name" value="Rhodopsin 7-helix transmembrane proteins"/>
    <property type="match status" value="1"/>
</dbReference>
<dbReference type="InterPro" id="IPR000276">
    <property type="entry name" value="GPCR_Rhodpsn"/>
</dbReference>
<dbReference type="InterPro" id="IPR017452">
    <property type="entry name" value="GPCR_Rhodpsn_7TM"/>
</dbReference>
<dbReference type="InterPro" id="IPR001151">
    <property type="entry name" value="GPR6"/>
</dbReference>
<dbReference type="InterPro" id="IPR000723">
    <property type="entry name" value="GPR_3/6/12_orphan"/>
</dbReference>
<dbReference type="PANTHER" id="PTHR22750">
    <property type="entry name" value="G-PROTEIN COUPLED RECEPTOR"/>
    <property type="match status" value="1"/>
</dbReference>
<dbReference type="Pfam" id="PF00001">
    <property type="entry name" value="7tm_1"/>
    <property type="match status" value="1"/>
</dbReference>
<dbReference type="PRINTS" id="PR00237">
    <property type="entry name" value="GPCRRHODOPSN"/>
</dbReference>
<dbReference type="PRINTS" id="PR00649">
    <property type="entry name" value="GPR6ORPHANR"/>
</dbReference>
<dbReference type="PRINTS" id="PR00644">
    <property type="entry name" value="GPRORPHANR"/>
</dbReference>
<dbReference type="SMART" id="SM01381">
    <property type="entry name" value="7TM_GPCR_Srsx"/>
    <property type="match status" value="1"/>
</dbReference>
<dbReference type="SUPFAM" id="SSF81321">
    <property type="entry name" value="Family A G protein-coupled receptor-like"/>
    <property type="match status" value="1"/>
</dbReference>
<dbReference type="PROSITE" id="PS00237">
    <property type="entry name" value="G_PROTEIN_RECEP_F1_1"/>
    <property type="match status" value="1"/>
</dbReference>
<dbReference type="PROSITE" id="PS50262">
    <property type="entry name" value="G_PROTEIN_RECEP_F1_2"/>
    <property type="match status" value="1"/>
</dbReference>
<comment type="function">
    <text evidence="1 5">Orphan receptor with constitutive G(s) signaling activity that activate cyclic AMP. Promotes neurite outgrowth and blocks myelin inhibition in neurons (By similarity).</text>
</comment>
<comment type="subcellular location">
    <subcellularLocation>
        <location evidence="9">Cell membrane</location>
        <topology evidence="9">Multi-pass membrane protein</topology>
    </subcellularLocation>
    <text>Highly expressed and localized along the cytoplasmic membrane as well as in a perinuclear compartment.</text>
</comment>
<comment type="tissue specificity">
    <text evidence="6 7">Mainly expressed in the brain. Selectively expressed in striatopallidal neurons in the striatum.</text>
</comment>
<comment type="disruption phenotype">
    <text evidence="7">Deficient mice show reduced striatal cyclic AMP production and selective alterations in instrumental conditioning.</text>
</comment>
<comment type="similarity">
    <text evidence="3">Belongs to the G-protein coupled receptor 1 family.</text>
</comment>
<comment type="caution">
    <text evidence="8">Was originally (PubMed:14592418) thought to be a receptor for sphingosine 1-phosphate. It has been demonstrated that it is not the case in human.</text>
</comment>
<sequence length="363" mass="38085">MNASAAALNESQVVAVAAEGAAAAATAAGAPDTGEWGPPAASAALGGGGGPNGSLELSSQLPAGPSGLLLSAVNPWDVLLCVSGTVIAGENALVVALIASTPALRTPMFVLVGSLATADLLAGCGLILHFVFQYVVPSETVSLLMVGFLVASFAASVSSLLAITVDRYLSLYNALTYYSRRTLLGVHLLLAATWTVSLGLGLLPVLGWNCLADRTSCSVVRPLTRSHVALLSTSFFVVFGIMLHLYVRICQVVWRHAHQIALQQHCLAPPHLAATRKGVGTLAVVLGTFGASWLPFAIYCVVGSQEDPAIYTYATLLPATYNSMINPIIYAFRNQEIQRALWLLFCGCFQSKVPFRSRSPSEV</sequence>
<evidence type="ECO:0000250" key="1"/>
<evidence type="ECO:0000255" key="2"/>
<evidence type="ECO:0000255" key="3">
    <source>
        <dbReference type="PROSITE-ProRule" id="PRU00521"/>
    </source>
</evidence>
<evidence type="ECO:0000256" key="4">
    <source>
        <dbReference type="SAM" id="MobiDB-lite"/>
    </source>
</evidence>
<evidence type="ECO:0000269" key="5">
    <source>
    </source>
</evidence>
<evidence type="ECO:0000269" key="6">
    <source>
    </source>
</evidence>
<evidence type="ECO:0000269" key="7">
    <source>
    </source>
</evidence>
<evidence type="ECO:0000305" key="8">
    <source>
    </source>
</evidence>
<evidence type="ECO:0000305" key="9">
    <source>
    </source>
</evidence>
<name>GPR6_MOUSE</name>
<reference key="1">
    <citation type="journal article" date="2003" name="Biochem. Biophys. Res. Commun.">
        <title>Sphingosine-1-phosphate is a high-affinity ligand for the G protein-coupled receptor GPR6 from mouse and induces intracellular Ca2+ release by activating the sphingosine-kinase pathway.</title>
        <authorList>
            <person name="Ignatov A."/>
            <person name="Lintzel J."/>
            <person name="Kreienkamp H.J."/>
            <person name="Schaller H.C."/>
        </authorList>
    </citation>
    <scope>NUCLEOTIDE SEQUENCE [MRNA]</scope>
    <scope>FUNCTION</scope>
    <source>
        <strain>C57BL/6J</strain>
        <tissue>Brain</tissue>
    </source>
</reference>
<reference key="2">
    <citation type="journal article" date="2005" name="Science">
        <title>The transcriptional landscape of the mammalian genome.</title>
        <authorList>
            <person name="Carninci P."/>
            <person name="Kasukawa T."/>
            <person name="Katayama S."/>
            <person name="Gough J."/>
            <person name="Frith M.C."/>
            <person name="Maeda N."/>
            <person name="Oyama R."/>
            <person name="Ravasi T."/>
            <person name="Lenhard B."/>
            <person name="Wells C."/>
            <person name="Kodzius R."/>
            <person name="Shimokawa K."/>
            <person name="Bajic V.B."/>
            <person name="Brenner S.E."/>
            <person name="Batalov S."/>
            <person name="Forrest A.R."/>
            <person name="Zavolan M."/>
            <person name="Davis M.J."/>
            <person name="Wilming L.G."/>
            <person name="Aidinis V."/>
            <person name="Allen J.E."/>
            <person name="Ambesi-Impiombato A."/>
            <person name="Apweiler R."/>
            <person name="Aturaliya R.N."/>
            <person name="Bailey T.L."/>
            <person name="Bansal M."/>
            <person name="Baxter L."/>
            <person name="Beisel K.W."/>
            <person name="Bersano T."/>
            <person name="Bono H."/>
            <person name="Chalk A.M."/>
            <person name="Chiu K.P."/>
            <person name="Choudhary V."/>
            <person name="Christoffels A."/>
            <person name="Clutterbuck D.R."/>
            <person name="Crowe M.L."/>
            <person name="Dalla E."/>
            <person name="Dalrymple B.P."/>
            <person name="de Bono B."/>
            <person name="Della Gatta G."/>
            <person name="di Bernardo D."/>
            <person name="Down T."/>
            <person name="Engstrom P."/>
            <person name="Fagiolini M."/>
            <person name="Faulkner G."/>
            <person name="Fletcher C.F."/>
            <person name="Fukushima T."/>
            <person name="Furuno M."/>
            <person name="Futaki S."/>
            <person name="Gariboldi M."/>
            <person name="Georgii-Hemming P."/>
            <person name="Gingeras T.R."/>
            <person name="Gojobori T."/>
            <person name="Green R.E."/>
            <person name="Gustincich S."/>
            <person name="Harbers M."/>
            <person name="Hayashi Y."/>
            <person name="Hensch T.K."/>
            <person name="Hirokawa N."/>
            <person name="Hill D."/>
            <person name="Huminiecki L."/>
            <person name="Iacono M."/>
            <person name="Ikeo K."/>
            <person name="Iwama A."/>
            <person name="Ishikawa T."/>
            <person name="Jakt M."/>
            <person name="Kanapin A."/>
            <person name="Katoh M."/>
            <person name="Kawasawa Y."/>
            <person name="Kelso J."/>
            <person name="Kitamura H."/>
            <person name="Kitano H."/>
            <person name="Kollias G."/>
            <person name="Krishnan S.P."/>
            <person name="Kruger A."/>
            <person name="Kummerfeld S.K."/>
            <person name="Kurochkin I.V."/>
            <person name="Lareau L.F."/>
            <person name="Lazarevic D."/>
            <person name="Lipovich L."/>
            <person name="Liu J."/>
            <person name="Liuni S."/>
            <person name="McWilliam S."/>
            <person name="Madan Babu M."/>
            <person name="Madera M."/>
            <person name="Marchionni L."/>
            <person name="Matsuda H."/>
            <person name="Matsuzawa S."/>
            <person name="Miki H."/>
            <person name="Mignone F."/>
            <person name="Miyake S."/>
            <person name="Morris K."/>
            <person name="Mottagui-Tabar S."/>
            <person name="Mulder N."/>
            <person name="Nakano N."/>
            <person name="Nakauchi H."/>
            <person name="Ng P."/>
            <person name="Nilsson R."/>
            <person name="Nishiguchi S."/>
            <person name="Nishikawa S."/>
            <person name="Nori F."/>
            <person name="Ohara O."/>
            <person name="Okazaki Y."/>
            <person name="Orlando V."/>
            <person name="Pang K.C."/>
            <person name="Pavan W.J."/>
            <person name="Pavesi G."/>
            <person name="Pesole G."/>
            <person name="Petrovsky N."/>
            <person name="Piazza S."/>
            <person name="Reed J."/>
            <person name="Reid J.F."/>
            <person name="Ring B.Z."/>
            <person name="Ringwald M."/>
            <person name="Rost B."/>
            <person name="Ruan Y."/>
            <person name="Salzberg S.L."/>
            <person name="Sandelin A."/>
            <person name="Schneider C."/>
            <person name="Schoenbach C."/>
            <person name="Sekiguchi K."/>
            <person name="Semple C.A."/>
            <person name="Seno S."/>
            <person name="Sessa L."/>
            <person name="Sheng Y."/>
            <person name="Shibata Y."/>
            <person name="Shimada H."/>
            <person name="Shimada K."/>
            <person name="Silva D."/>
            <person name="Sinclair B."/>
            <person name="Sperling S."/>
            <person name="Stupka E."/>
            <person name="Sugiura K."/>
            <person name="Sultana R."/>
            <person name="Takenaka Y."/>
            <person name="Taki K."/>
            <person name="Tammoja K."/>
            <person name="Tan S.L."/>
            <person name="Tang S."/>
            <person name="Taylor M.S."/>
            <person name="Tegner J."/>
            <person name="Teichmann S.A."/>
            <person name="Ueda H.R."/>
            <person name="van Nimwegen E."/>
            <person name="Verardo R."/>
            <person name="Wei C.L."/>
            <person name="Yagi K."/>
            <person name="Yamanishi H."/>
            <person name="Zabarovsky E."/>
            <person name="Zhu S."/>
            <person name="Zimmer A."/>
            <person name="Hide W."/>
            <person name="Bult C."/>
            <person name="Grimmond S.M."/>
            <person name="Teasdale R.D."/>
            <person name="Liu E.T."/>
            <person name="Brusic V."/>
            <person name="Quackenbush J."/>
            <person name="Wahlestedt C."/>
            <person name="Mattick J.S."/>
            <person name="Hume D.A."/>
            <person name="Kai C."/>
            <person name="Sasaki D."/>
            <person name="Tomaru Y."/>
            <person name="Fukuda S."/>
            <person name="Kanamori-Katayama M."/>
            <person name="Suzuki M."/>
            <person name="Aoki J."/>
            <person name="Arakawa T."/>
            <person name="Iida J."/>
            <person name="Imamura K."/>
            <person name="Itoh M."/>
            <person name="Kato T."/>
            <person name="Kawaji H."/>
            <person name="Kawagashira N."/>
            <person name="Kawashima T."/>
            <person name="Kojima M."/>
            <person name="Kondo S."/>
            <person name="Konno H."/>
            <person name="Nakano K."/>
            <person name="Ninomiya N."/>
            <person name="Nishio T."/>
            <person name="Okada M."/>
            <person name="Plessy C."/>
            <person name="Shibata K."/>
            <person name="Shiraki T."/>
            <person name="Suzuki S."/>
            <person name="Tagami M."/>
            <person name="Waki K."/>
            <person name="Watahiki A."/>
            <person name="Okamura-Oho Y."/>
            <person name="Suzuki H."/>
            <person name="Kawai J."/>
            <person name="Hayashizaki Y."/>
        </authorList>
    </citation>
    <scope>NUCLEOTIDE SEQUENCE [LARGE SCALE MRNA]</scope>
    <source>
        <strain>C57BL/6J</strain>
        <tissue>Brain cortex</tissue>
    </source>
</reference>
<reference key="3">
    <citation type="journal article" date="2007" name="J. Biol. Chem.">
        <title>Neural expression of G protein-coupled receptors GPR3, GPR6, and GPR12 up-regulates cyclic AMP levels and promotes neurite outgrowth.</title>
        <authorList>
            <person name="Tanaka S."/>
            <person name="Ishii K."/>
            <person name="Kasai K."/>
            <person name="Yoon S.O."/>
            <person name="Saeki Y."/>
        </authorList>
    </citation>
    <scope>TISSUE SPECIFICITY</scope>
    <scope>SUBCELLULAR LOCATION</scope>
</reference>
<reference key="4">
    <citation type="journal article" date="2007" name="Nat. Neurosci.">
        <title>Genetic control of instrumental conditioning by striatopallidal neuron-specific S1P receptor Gpr6.</title>
        <authorList>
            <person name="Lobo M.K."/>
            <person name="Cui Y."/>
            <person name="Ostlund S.B."/>
            <person name="Balleine B.W."/>
            <person name="Yang X.W."/>
        </authorList>
    </citation>
    <scope>DISRUPTION PHENOTYPE</scope>
    <scope>TISSUE SPECIFICITY</scope>
</reference>
<feature type="chain" id="PRO_0000069515" description="G-protein coupled receptor 6">
    <location>
        <begin position="1"/>
        <end position="363"/>
    </location>
</feature>
<feature type="topological domain" description="Extracellular" evidence="2">
    <location>
        <begin position="1"/>
        <end position="75"/>
    </location>
</feature>
<feature type="transmembrane region" description="Helical; Name=1" evidence="2">
    <location>
        <begin position="76"/>
        <end position="95"/>
    </location>
</feature>
<feature type="topological domain" description="Cytoplasmic" evidence="2">
    <location>
        <begin position="96"/>
        <end position="107"/>
    </location>
</feature>
<feature type="transmembrane region" description="Helical; Name=2" evidence="2">
    <location>
        <begin position="108"/>
        <end position="131"/>
    </location>
</feature>
<feature type="topological domain" description="Extracellular" evidence="2">
    <location>
        <begin position="132"/>
        <end position="143"/>
    </location>
</feature>
<feature type="transmembrane region" description="Helical; Name=3" evidence="2">
    <location>
        <begin position="144"/>
        <end position="165"/>
    </location>
</feature>
<feature type="topological domain" description="Cytoplasmic" evidence="2">
    <location>
        <begin position="166"/>
        <end position="186"/>
    </location>
</feature>
<feature type="transmembrane region" description="Helical; Name=4" evidence="2">
    <location>
        <begin position="187"/>
        <end position="206"/>
    </location>
</feature>
<feature type="topological domain" description="Extracellular" evidence="2">
    <location>
        <begin position="207"/>
        <end position="231"/>
    </location>
</feature>
<feature type="transmembrane region" description="Helical; Name=5" evidence="2">
    <location>
        <begin position="232"/>
        <end position="250"/>
    </location>
</feature>
<feature type="topological domain" description="Cytoplasmic" evidence="2">
    <location>
        <begin position="251"/>
        <end position="278"/>
    </location>
</feature>
<feature type="transmembrane region" description="Helical; Name=6" evidence="2">
    <location>
        <begin position="279"/>
        <end position="305"/>
    </location>
</feature>
<feature type="topological domain" description="Extracellular" evidence="2">
    <location>
        <begin position="306"/>
        <end position="310"/>
    </location>
</feature>
<feature type="transmembrane region" description="Helical; Name=7" evidence="2">
    <location>
        <begin position="311"/>
        <end position="332"/>
    </location>
</feature>
<feature type="topological domain" description="Cytoplasmic" evidence="2">
    <location>
        <begin position="333"/>
        <end position="363"/>
    </location>
</feature>
<feature type="region of interest" description="Disordered" evidence="4">
    <location>
        <begin position="29"/>
        <end position="48"/>
    </location>
</feature>
<feature type="modified residue" description="Phosphoserine" evidence="2">
    <location>
        <position position="357"/>
    </location>
</feature>
<feature type="modified residue" description="Phosphoserine" evidence="2">
    <location>
        <position position="359"/>
    </location>
</feature>
<feature type="modified residue" description="Phosphoserine" evidence="2">
    <location>
        <position position="361"/>
    </location>
</feature>
<feature type="lipid moiety-binding region" description="S-palmitoyl cysteine" evidence="1">
    <location>
        <position position="346"/>
    </location>
</feature>
<feature type="glycosylation site" description="N-linked (GlcNAc...) asparagine" evidence="2">
    <location>
        <position position="2"/>
    </location>
</feature>
<feature type="glycosylation site" description="N-linked (GlcNAc...) asparagine" evidence="2">
    <location>
        <position position="9"/>
    </location>
</feature>
<feature type="glycosylation site" description="N-linked (GlcNAc...) asparagine" evidence="2">
    <location>
        <position position="52"/>
    </location>
</feature>
<organism>
    <name type="scientific">Mus musculus</name>
    <name type="common">Mouse</name>
    <dbReference type="NCBI Taxonomy" id="10090"/>
    <lineage>
        <taxon>Eukaryota</taxon>
        <taxon>Metazoa</taxon>
        <taxon>Chordata</taxon>
        <taxon>Craniata</taxon>
        <taxon>Vertebrata</taxon>
        <taxon>Euteleostomi</taxon>
        <taxon>Mammalia</taxon>
        <taxon>Eutheria</taxon>
        <taxon>Euarchontoglires</taxon>
        <taxon>Glires</taxon>
        <taxon>Rodentia</taxon>
        <taxon>Myomorpha</taxon>
        <taxon>Muroidea</taxon>
        <taxon>Muridae</taxon>
        <taxon>Murinae</taxon>
        <taxon>Mus</taxon>
        <taxon>Mus</taxon>
    </lineage>
</organism>
<protein>
    <recommendedName>
        <fullName>G-protein coupled receptor 6</fullName>
    </recommendedName>
    <alternativeName>
        <fullName>Sphingosine 1-phosphate receptor GPR6</fullName>
    </alternativeName>
</protein>
<proteinExistence type="evidence at transcript level"/>
<keyword id="KW-1003">Cell membrane</keyword>
<keyword id="KW-0297">G-protein coupled receptor</keyword>
<keyword id="KW-0325">Glycoprotein</keyword>
<keyword id="KW-0449">Lipoprotein</keyword>
<keyword id="KW-0472">Membrane</keyword>
<keyword id="KW-0564">Palmitate</keyword>
<keyword id="KW-0597">Phosphoprotein</keyword>
<keyword id="KW-0675">Receptor</keyword>
<keyword id="KW-1185">Reference proteome</keyword>
<keyword id="KW-0807">Transducer</keyword>
<keyword id="KW-0812">Transmembrane</keyword>
<keyword id="KW-1133">Transmembrane helix</keyword>